<protein>
    <recommendedName>
        <fullName evidence="1">ATP synthase gamma chain</fullName>
    </recommendedName>
    <alternativeName>
        <fullName evidence="1">ATP synthase F1 sector gamma subunit</fullName>
    </alternativeName>
    <alternativeName>
        <fullName evidence="1">F-ATPase gamma subunit</fullName>
    </alternativeName>
</protein>
<keyword id="KW-0066">ATP synthesis</keyword>
<keyword id="KW-0997">Cell inner membrane</keyword>
<keyword id="KW-1003">Cell membrane</keyword>
<keyword id="KW-0139">CF(1)</keyword>
<keyword id="KW-0375">Hydrogen ion transport</keyword>
<keyword id="KW-0406">Ion transport</keyword>
<keyword id="KW-0472">Membrane</keyword>
<keyword id="KW-1185">Reference proteome</keyword>
<keyword id="KW-0813">Transport</keyword>
<feature type="chain" id="PRO_1000134105" description="ATP synthase gamma chain">
    <location>
        <begin position="1"/>
        <end position="290"/>
    </location>
</feature>
<proteinExistence type="inferred from homology"/>
<sequence>MPNIKEIVSRINSVHSTQQITKAMKMVAAAKLTKAQHQLLQLRPYAGGLSDILNHVIYSTEAELTKHYTQKRTIQRLMLVVISSDKGLCGSFNANIIKNTEAYINQFKDLLPTQIDILVIGKKALNFFQKKDYNLITTYTDLAGQLQFEDISEVASFIMDAFLNYTYDRVELIYNLFGSAASQFVQLEPFLPIVHPASPSHNNHVDYIYEPSKASLVETLIPMTLKIQLYKALLESAASEHGARMTTMSKATDNAEELLKSLRITYNKTRQAAITNEILEIAAGAEALSQ</sequence>
<gene>
    <name evidence="1" type="primary">atpG</name>
    <name type="ordered locus">Aasi_0066</name>
</gene>
<organism>
    <name type="scientific">Amoebophilus asiaticus (strain 5a2)</name>
    <dbReference type="NCBI Taxonomy" id="452471"/>
    <lineage>
        <taxon>Bacteria</taxon>
        <taxon>Pseudomonadati</taxon>
        <taxon>Bacteroidota</taxon>
        <taxon>Cytophagia</taxon>
        <taxon>Cytophagales</taxon>
        <taxon>Amoebophilaceae</taxon>
        <taxon>Candidatus Amoebophilus</taxon>
    </lineage>
</organism>
<dbReference type="EMBL" id="CP001102">
    <property type="protein sequence ID" value="ACE05518.1"/>
    <property type="molecule type" value="Genomic_DNA"/>
</dbReference>
<dbReference type="RefSeq" id="WP_012472290.1">
    <property type="nucleotide sequence ID" value="NC_010830.1"/>
</dbReference>
<dbReference type="SMR" id="B3EU99"/>
<dbReference type="STRING" id="452471.Aasi_0066"/>
<dbReference type="KEGG" id="aas:Aasi_0066"/>
<dbReference type="eggNOG" id="COG0224">
    <property type="taxonomic scope" value="Bacteria"/>
</dbReference>
<dbReference type="HOGENOM" id="CLU_050669_0_1_10"/>
<dbReference type="OrthoDB" id="9812769at2"/>
<dbReference type="Proteomes" id="UP000001227">
    <property type="component" value="Chromosome"/>
</dbReference>
<dbReference type="GO" id="GO:0005886">
    <property type="term" value="C:plasma membrane"/>
    <property type="evidence" value="ECO:0007669"/>
    <property type="project" value="UniProtKB-SubCell"/>
</dbReference>
<dbReference type="GO" id="GO:0045259">
    <property type="term" value="C:proton-transporting ATP synthase complex"/>
    <property type="evidence" value="ECO:0007669"/>
    <property type="project" value="UniProtKB-KW"/>
</dbReference>
<dbReference type="GO" id="GO:0005524">
    <property type="term" value="F:ATP binding"/>
    <property type="evidence" value="ECO:0007669"/>
    <property type="project" value="UniProtKB-UniRule"/>
</dbReference>
<dbReference type="GO" id="GO:0046933">
    <property type="term" value="F:proton-transporting ATP synthase activity, rotational mechanism"/>
    <property type="evidence" value="ECO:0007669"/>
    <property type="project" value="UniProtKB-UniRule"/>
</dbReference>
<dbReference type="GO" id="GO:0042777">
    <property type="term" value="P:proton motive force-driven plasma membrane ATP synthesis"/>
    <property type="evidence" value="ECO:0007669"/>
    <property type="project" value="UniProtKB-UniRule"/>
</dbReference>
<dbReference type="CDD" id="cd12151">
    <property type="entry name" value="F1-ATPase_gamma"/>
    <property type="match status" value="1"/>
</dbReference>
<dbReference type="Gene3D" id="3.40.1380.10">
    <property type="match status" value="1"/>
</dbReference>
<dbReference type="Gene3D" id="1.10.287.80">
    <property type="entry name" value="ATP synthase, gamma subunit, helix hairpin domain"/>
    <property type="match status" value="1"/>
</dbReference>
<dbReference type="HAMAP" id="MF_00815">
    <property type="entry name" value="ATP_synth_gamma_bact"/>
    <property type="match status" value="1"/>
</dbReference>
<dbReference type="InterPro" id="IPR035968">
    <property type="entry name" value="ATP_synth_F1_ATPase_gsu"/>
</dbReference>
<dbReference type="InterPro" id="IPR000131">
    <property type="entry name" value="ATP_synth_F1_gsu"/>
</dbReference>
<dbReference type="InterPro" id="IPR023632">
    <property type="entry name" value="ATP_synth_F1_gsu_CS"/>
</dbReference>
<dbReference type="NCBIfam" id="TIGR01146">
    <property type="entry name" value="ATPsyn_F1gamma"/>
    <property type="match status" value="1"/>
</dbReference>
<dbReference type="PANTHER" id="PTHR11693">
    <property type="entry name" value="ATP SYNTHASE GAMMA CHAIN"/>
    <property type="match status" value="1"/>
</dbReference>
<dbReference type="PANTHER" id="PTHR11693:SF22">
    <property type="entry name" value="ATP SYNTHASE SUBUNIT GAMMA, MITOCHONDRIAL"/>
    <property type="match status" value="1"/>
</dbReference>
<dbReference type="Pfam" id="PF00231">
    <property type="entry name" value="ATP-synt"/>
    <property type="match status" value="1"/>
</dbReference>
<dbReference type="PRINTS" id="PR00126">
    <property type="entry name" value="ATPASEGAMMA"/>
</dbReference>
<dbReference type="SUPFAM" id="SSF52943">
    <property type="entry name" value="ATP synthase (F1-ATPase), gamma subunit"/>
    <property type="match status" value="1"/>
</dbReference>
<dbReference type="PROSITE" id="PS00153">
    <property type="entry name" value="ATPASE_GAMMA"/>
    <property type="match status" value="1"/>
</dbReference>
<evidence type="ECO:0000255" key="1">
    <source>
        <dbReference type="HAMAP-Rule" id="MF_00815"/>
    </source>
</evidence>
<name>ATPG_AMOA5</name>
<comment type="function">
    <text evidence="1">Produces ATP from ADP in the presence of a proton gradient across the membrane. The gamma chain is believed to be important in regulating ATPase activity and the flow of protons through the CF(0) complex.</text>
</comment>
<comment type="subunit">
    <text evidence="1">F-type ATPases have 2 components, CF(1) - the catalytic core - and CF(0) - the membrane proton channel. CF(1) has five subunits: alpha(3), beta(3), gamma(1), delta(1), epsilon(1). CF(0) has three main subunits: a, b and c.</text>
</comment>
<comment type="subcellular location">
    <subcellularLocation>
        <location evidence="1">Cell inner membrane</location>
        <topology evidence="1">Peripheral membrane protein</topology>
    </subcellularLocation>
</comment>
<comment type="similarity">
    <text evidence="1">Belongs to the ATPase gamma chain family.</text>
</comment>
<accession>B3EU99</accession>
<reference key="1">
    <citation type="journal article" date="2010" name="J. Bacteriol.">
        <title>The genome of the amoeba symbiont 'Candidatus Amoebophilus asiaticus' reveals common mechanisms for host cell interaction among amoeba-associated bacteria.</title>
        <authorList>
            <person name="Schmitz-Esser S."/>
            <person name="Tischler P."/>
            <person name="Arnold R."/>
            <person name="Montanaro J."/>
            <person name="Wagner M."/>
            <person name="Rattei T."/>
            <person name="Horn M."/>
        </authorList>
    </citation>
    <scope>NUCLEOTIDE SEQUENCE [LARGE SCALE GENOMIC DNA]</scope>
    <source>
        <strain>5a2</strain>
    </source>
</reference>